<feature type="chain" id="PRO_1000059023" description="ATP-dependent protease ATPase subunit HslU">
    <location>
        <begin position="1"/>
        <end position="443"/>
    </location>
</feature>
<feature type="binding site" evidence="1">
    <location>
        <position position="18"/>
    </location>
    <ligand>
        <name>ATP</name>
        <dbReference type="ChEBI" id="CHEBI:30616"/>
    </ligand>
</feature>
<feature type="binding site" evidence="1">
    <location>
        <begin position="60"/>
        <end position="65"/>
    </location>
    <ligand>
        <name>ATP</name>
        <dbReference type="ChEBI" id="CHEBI:30616"/>
    </ligand>
</feature>
<feature type="binding site" evidence="1">
    <location>
        <position position="256"/>
    </location>
    <ligand>
        <name>ATP</name>
        <dbReference type="ChEBI" id="CHEBI:30616"/>
    </ligand>
</feature>
<feature type="binding site" evidence="1">
    <location>
        <position position="321"/>
    </location>
    <ligand>
        <name>ATP</name>
        <dbReference type="ChEBI" id="CHEBI:30616"/>
    </ligand>
</feature>
<feature type="binding site" evidence="1">
    <location>
        <position position="393"/>
    </location>
    <ligand>
        <name>ATP</name>
        <dbReference type="ChEBI" id="CHEBI:30616"/>
    </ligand>
</feature>
<name>HSLU_ECOHS</name>
<evidence type="ECO:0000255" key="1">
    <source>
        <dbReference type="HAMAP-Rule" id="MF_00249"/>
    </source>
</evidence>
<keyword id="KW-0067">ATP-binding</keyword>
<keyword id="KW-0143">Chaperone</keyword>
<keyword id="KW-0963">Cytoplasm</keyword>
<keyword id="KW-0547">Nucleotide-binding</keyword>
<keyword id="KW-0346">Stress response</keyword>
<protein>
    <recommendedName>
        <fullName evidence="1">ATP-dependent protease ATPase subunit HslU</fullName>
    </recommendedName>
    <alternativeName>
        <fullName evidence="1">Heat shock protein HslU</fullName>
    </alternativeName>
    <alternativeName>
        <fullName evidence="1">Unfoldase HslU</fullName>
    </alternativeName>
</protein>
<reference key="1">
    <citation type="journal article" date="2008" name="J. Bacteriol.">
        <title>The pangenome structure of Escherichia coli: comparative genomic analysis of E. coli commensal and pathogenic isolates.</title>
        <authorList>
            <person name="Rasko D.A."/>
            <person name="Rosovitz M.J."/>
            <person name="Myers G.S.A."/>
            <person name="Mongodin E.F."/>
            <person name="Fricke W.F."/>
            <person name="Gajer P."/>
            <person name="Crabtree J."/>
            <person name="Sebaihia M."/>
            <person name="Thomson N.R."/>
            <person name="Chaudhuri R."/>
            <person name="Henderson I.R."/>
            <person name="Sperandio V."/>
            <person name="Ravel J."/>
        </authorList>
    </citation>
    <scope>NUCLEOTIDE SEQUENCE [LARGE SCALE GENOMIC DNA]</scope>
    <source>
        <strain>HS</strain>
    </source>
</reference>
<organism>
    <name type="scientific">Escherichia coli O9:H4 (strain HS)</name>
    <dbReference type="NCBI Taxonomy" id="331112"/>
    <lineage>
        <taxon>Bacteria</taxon>
        <taxon>Pseudomonadati</taxon>
        <taxon>Pseudomonadota</taxon>
        <taxon>Gammaproteobacteria</taxon>
        <taxon>Enterobacterales</taxon>
        <taxon>Enterobacteriaceae</taxon>
        <taxon>Escherichia</taxon>
    </lineage>
</organism>
<accession>A8A737</accession>
<gene>
    <name evidence="1" type="primary">hslU</name>
    <name type="ordered locus">EcHS_A4163</name>
</gene>
<comment type="function">
    <text evidence="1">ATPase subunit of a proteasome-like degradation complex; this subunit has chaperone activity. The binding of ATP and its subsequent hydrolysis by HslU are essential for unfolding of protein substrates subsequently hydrolyzed by HslV. HslU recognizes the N-terminal part of its protein substrates and unfolds these before they are guided to HslV for hydrolysis.</text>
</comment>
<comment type="subunit">
    <text evidence="1">A double ring-shaped homohexamer of HslV is capped on each side by a ring-shaped HslU homohexamer. The assembly of the HslU/HslV complex is dependent on binding of ATP.</text>
</comment>
<comment type="subcellular location">
    <subcellularLocation>
        <location evidence="1">Cytoplasm</location>
    </subcellularLocation>
</comment>
<comment type="induction">
    <text evidence="1">By heat shock.</text>
</comment>
<comment type="similarity">
    <text evidence="1">Belongs to the ClpX chaperone family. HslU subfamily.</text>
</comment>
<proteinExistence type="inferred from homology"/>
<sequence>MSEMTPREIVSELDKHIIGQDNAKRSVAIALRNRWRRMQLNEELRHEVTPKNILMIGPTGVGKTEIARRLAKLANAPFIKVEATKFTEVGYVGKEVDSIIRDLTDAAVKMVRVQAIEKNRYRAEELAEERILDVLIPPAKNNWGQTEQQQEPSAARQAFRKKLREGQLDDKEIEIDLAAAPMGVEIMAPPGMEEMTSQLQSMFQNLGGQKQKARKLKIKDAMKLLIEEEAAKLVNPEELKQDAIDAVEQHGIVFIDEIDKICKRGESSGPDVSREGVQRDLLPLVEGCTVSTKHGMVKTDHILFIASGAFQIAKPSDLIPELQGRLPIRVELQALTTSDFERILTEPNASITVQYKALMATEGVNIEFTDSGIKRIAEAAWQVNESTENIGARRLHTVLERLMEEISYDASDLSGQNITIDADYVSKHLDALVADEDLSRFIL</sequence>
<dbReference type="EMBL" id="CP000802">
    <property type="protein sequence ID" value="ABV08341.1"/>
    <property type="molecule type" value="Genomic_DNA"/>
</dbReference>
<dbReference type="RefSeq" id="WP_001293341.1">
    <property type="nucleotide sequence ID" value="NC_009800.1"/>
</dbReference>
<dbReference type="SMR" id="A8A737"/>
<dbReference type="GeneID" id="93777967"/>
<dbReference type="KEGG" id="ecx:EcHS_A4163"/>
<dbReference type="HOGENOM" id="CLU_033123_0_0_6"/>
<dbReference type="GO" id="GO:0009376">
    <property type="term" value="C:HslUV protease complex"/>
    <property type="evidence" value="ECO:0007669"/>
    <property type="project" value="UniProtKB-UniRule"/>
</dbReference>
<dbReference type="GO" id="GO:0005524">
    <property type="term" value="F:ATP binding"/>
    <property type="evidence" value="ECO:0007669"/>
    <property type="project" value="UniProtKB-UniRule"/>
</dbReference>
<dbReference type="GO" id="GO:0016887">
    <property type="term" value="F:ATP hydrolysis activity"/>
    <property type="evidence" value="ECO:0007669"/>
    <property type="project" value="InterPro"/>
</dbReference>
<dbReference type="GO" id="GO:0008233">
    <property type="term" value="F:peptidase activity"/>
    <property type="evidence" value="ECO:0007669"/>
    <property type="project" value="InterPro"/>
</dbReference>
<dbReference type="GO" id="GO:0036402">
    <property type="term" value="F:proteasome-activating activity"/>
    <property type="evidence" value="ECO:0007669"/>
    <property type="project" value="UniProtKB-UniRule"/>
</dbReference>
<dbReference type="GO" id="GO:0043335">
    <property type="term" value="P:protein unfolding"/>
    <property type="evidence" value="ECO:0007669"/>
    <property type="project" value="UniProtKB-UniRule"/>
</dbReference>
<dbReference type="GO" id="GO:0051603">
    <property type="term" value="P:proteolysis involved in protein catabolic process"/>
    <property type="evidence" value="ECO:0007669"/>
    <property type="project" value="TreeGrafter"/>
</dbReference>
<dbReference type="CDD" id="cd19498">
    <property type="entry name" value="RecA-like_HslU"/>
    <property type="match status" value="1"/>
</dbReference>
<dbReference type="FunFam" id="1.10.8.10:FF:000012">
    <property type="entry name" value="ATP-dependent protease ATPase subunit HslU"/>
    <property type="match status" value="1"/>
</dbReference>
<dbReference type="FunFam" id="1.10.8.10:FF:000028">
    <property type="entry name" value="ATP-dependent protease ATPase subunit HslU"/>
    <property type="match status" value="1"/>
</dbReference>
<dbReference type="FunFam" id="1.10.8.60:FF:000027">
    <property type="entry name" value="ATP-dependent protease ATPase subunit HslU"/>
    <property type="match status" value="1"/>
</dbReference>
<dbReference type="FunFam" id="3.40.50.300:FF:000213">
    <property type="entry name" value="ATP-dependent protease ATPase subunit HslU"/>
    <property type="match status" value="1"/>
</dbReference>
<dbReference type="FunFam" id="3.40.50.300:FF:000220">
    <property type="entry name" value="ATP-dependent protease ATPase subunit HslU"/>
    <property type="match status" value="1"/>
</dbReference>
<dbReference type="Gene3D" id="1.10.8.60">
    <property type="match status" value="1"/>
</dbReference>
<dbReference type="Gene3D" id="1.10.8.10">
    <property type="entry name" value="DNA helicase RuvA subunit, C-terminal domain"/>
    <property type="match status" value="2"/>
</dbReference>
<dbReference type="Gene3D" id="3.40.50.300">
    <property type="entry name" value="P-loop containing nucleotide triphosphate hydrolases"/>
    <property type="match status" value="1"/>
</dbReference>
<dbReference type="HAMAP" id="MF_00249">
    <property type="entry name" value="HslU"/>
    <property type="match status" value="1"/>
</dbReference>
<dbReference type="InterPro" id="IPR003593">
    <property type="entry name" value="AAA+_ATPase"/>
</dbReference>
<dbReference type="InterPro" id="IPR050052">
    <property type="entry name" value="ATP-dep_Clp_protease_ClpX"/>
</dbReference>
<dbReference type="InterPro" id="IPR003959">
    <property type="entry name" value="ATPase_AAA_core"/>
</dbReference>
<dbReference type="InterPro" id="IPR019489">
    <property type="entry name" value="Clp_ATPase_C"/>
</dbReference>
<dbReference type="InterPro" id="IPR004491">
    <property type="entry name" value="HslU"/>
</dbReference>
<dbReference type="InterPro" id="IPR027417">
    <property type="entry name" value="P-loop_NTPase"/>
</dbReference>
<dbReference type="NCBIfam" id="TIGR00390">
    <property type="entry name" value="hslU"/>
    <property type="match status" value="1"/>
</dbReference>
<dbReference type="NCBIfam" id="NF003544">
    <property type="entry name" value="PRK05201.1"/>
    <property type="match status" value="1"/>
</dbReference>
<dbReference type="PANTHER" id="PTHR48102">
    <property type="entry name" value="ATP-DEPENDENT CLP PROTEASE ATP-BINDING SUBUNIT CLPX-LIKE, MITOCHONDRIAL-RELATED"/>
    <property type="match status" value="1"/>
</dbReference>
<dbReference type="PANTHER" id="PTHR48102:SF3">
    <property type="entry name" value="ATP-DEPENDENT PROTEASE ATPASE SUBUNIT HSLU"/>
    <property type="match status" value="1"/>
</dbReference>
<dbReference type="Pfam" id="PF00004">
    <property type="entry name" value="AAA"/>
    <property type="match status" value="1"/>
</dbReference>
<dbReference type="Pfam" id="PF07724">
    <property type="entry name" value="AAA_2"/>
    <property type="match status" value="1"/>
</dbReference>
<dbReference type="SMART" id="SM00382">
    <property type="entry name" value="AAA"/>
    <property type="match status" value="1"/>
</dbReference>
<dbReference type="SMART" id="SM01086">
    <property type="entry name" value="ClpB_D2-small"/>
    <property type="match status" value="1"/>
</dbReference>
<dbReference type="SUPFAM" id="SSF52540">
    <property type="entry name" value="P-loop containing nucleoside triphosphate hydrolases"/>
    <property type="match status" value="1"/>
</dbReference>